<name>RS7_XANOR</name>
<comment type="function">
    <text evidence="1">One of the primary rRNA binding proteins, it binds directly to 16S rRNA where it nucleates assembly of the head domain of the 30S subunit. Is located at the subunit interface close to the decoding center, probably blocks exit of the E-site tRNA.</text>
</comment>
<comment type="subunit">
    <text evidence="1">Part of the 30S ribosomal subunit. Contacts proteins S9 and S11.</text>
</comment>
<comment type="similarity">
    <text evidence="1">Belongs to the universal ribosomal protein uS7 family.</text>
</comment>
<reference key="1">
    <citation type="journal article" date="2005" name="Nucleic Acids Res.">
        <title>The genome sequence of Xanthomonas oryzae pathovar oryzae KACC10331, the bacterial blight pathogen of rice.</title>
        <authorList>
            <person name="Lee B.-M."/>
            <person name="Park Y.-J."/>
            <person name="Park D.-S."/>
            <person name="Kang H.-W."/>
            <person name="Kim J.-G."/>
            <person name="Song E.-S."/>
            <person name="Park I.-C."/>
            <person name="Yoon U.-H."/>
            <person name="Hahn J.-H."/>
            <person name="Koo B.-S."/>
            <person name="Lee G.-B."/>
            <person name="Kim H."/>
            <person name="Park H.-S."/>
            <person name="Yoon K.-O."/>
            <person name="Kim J.-H."/>
            <person name="Jung C.-H."/>
            <person name="Koh N.-H."/>
            <person name="Seo J.-S."/>
            <person name="Go S.-J."/>
        </authorList>
    </citation>
    <scope>NUCLEOTIDE SEQUENCE [LARGE SCALE GENOMIC DNA]</scope>
    <source>
        <strain>KACC10331 / KXO85</strain>
    </source>
</reference>
<gene>
    <name evidence="1" type="primary">rpsG</name>
    <name type="ordered locus">XOO4897</name>
</gene>
<evidence type="ECO:0000255" key="1">
    <source>
        <dbReference type="HAMAP-Rule" id="MF_00480"/>
    </source>
</evidence>
<evidence type="ECO:0000305" key="2"/>
<proteinExistence type="inferred from homology"/>
<sequence>MSRKGSTPQRTVLPDPKHGSETIARFINMVMQSGKKSVAEKIVYGAMDVIGEKNPNAIELVQKALDNVAPAVEVKSRRVGGATYQVPVEVRSSRRMALAMRWLIDSARKRGENTMPRKLAAELLDAAESRGGAIKKREETHRMAEANKAFAHYRW</sequence>
<keyword id="KW-1185">Reference proteome</keyword>
<keyword id="KW-0687">Ribonucleoprotein</keyword>
<keyword id="KW-0689">Ribosomal protein</keyword>
<keyword id="KW-0694">RNA-binding</keyword>
<keyword id="KW-0699">rRNA-binding</keyword>
<keyword id="KW-0820">tRNA-binding</keyword>
<accession>Q05HS6</accession>
<protein>
    <recommendedName>
        <fullName evidence="1">Small ribosomal subunit protein uS7</fullName>
    </recommendedName>
    <alternativeName>
        <fullName evidence="2">30S ribosomal protein S7</fullName>
    </alternativeName>
</protein>
<dbReference type="EMBL" id="AE013598">
    <property type="protein sequence ID" value="ABJ90008.1"/>
    <property type="molecule type" value="Genomic_DNA"/>
</dbReference>
<dbReference type="SMR" id="Q05HS6"/>
<dbReference type="STRING" id="291331.XOO4897"/>
<dbReference type="KEGG" id="xoo:XOO4897"/>
<dbReference type="HOGENOM" id="CLU_072226_1_1_6"/>
<dbReference type="Proteomes" id="UP000006735">
    <property type="component" value="Chromosome"/>
</dbReference>
<dbReference type="GO" id="GO:0015935">
    <property type="term" value="C:small ribosomal subunit"/>
    <property type="evidence" value="ECO:0007669"/>
    <property type="project" value="InterPro"/>
</dbReference>
<dbReference type="GO" id="GO:0019843">
    <property type="term" value="F:rRNA binding"/>
    <property type="evidence" value="ECO:0007669"/>
    <property type="project" value="UniProtKB-UniRule"/>
</dbReference>
<dbReference type="GO" id="GO:0003735">
    <property type="term" value="F:structural constituent of ribosome"/>
    <property type="evidence" value="ECO:0007669"/>
    <property type="project" value="InterPro"/>
</dbReference>
<dbReference type="GO" id="GO:0000049">
    <property type="term" value="F:tRNA binding"/>
    <property type="evidence" value="ECO:0007669"/>
    <property type="project" value="UniProtKB-UniRule"/>
</dbReference>
<dbReference type="GO" id="GO:0006412">
    <property type="term" value="P:translation"/>
    <property type="evidence" value="ECO:0007669"/>
    <property type="project" value="UniProtKB-UniRule"/>
</dbReference>
<dbReference type="CDD" id="cd14869">
    <property type="entry name" value="uS7_Bacteria"/>
    <property type="match status" value="1"/>
</dbReference>
<dbReference type="FunFam" id="1.10.455.10:FF:000001">
    <property type="entry name" value="30S ribosomal protein S7"/>
    <property type="match status" value="1"/>
</dbReference>
<dbReference type="Gene3D" id="1.10.455.10">
    <property type="entry name" value="Ribosomal protein S7 domain"/>
    <property type="match status" value="1"/>
</dbReference>
<dbReference type="HAMAP" id="MF_00480_B">
    <property type="entry name" value="Ribosomal_uS7_B"/>
    <property type="match status" value="1"/>
</dbReference>
<dbReference type="InterPro" id="IPR000235">
    <property type="entry name" value="Ribosomal_uS7"/>
</dbReference>
<dbReference type="InterPro" id="IPR005717">
    <property type="entry name" value="Ribosomal_uS7_bac/org-type"/>
</dbReference>
<dbReference type="InterPro" id="IPR020606">
    <property type="entry name" value="Ribosomal_uS7_CS"/>
</dbReference>
<dbReference type="InterPro" id="IPR023798">
    <property type="entry name" value="Ribosomal_uS7_dom"/>
</dbReference>
<dbReference type="InterPro" id="IPR036823">
    <property type="entry name" value="Ribosomal_uS7_dom_sf"/>
</dbReference>
<dbReference type="NCBIfam" id="TIGR01029">
    <property type="entry name" value="rpsG_bact"/>
    <property type="match status" value="1"/>
</dbReference>
<dbReference type="PANTHER" id="PTHR11205">
    <property type="entry name" value="RIBOSOMAL PROTEIN S7"/>
    <property type="match status" value="1"/>
</dbReference>
<dbReference type="Pfam" id="PF00177">
    <property type="entry name" value="Ribosomal_S7"/>
    <property type="match status" value="1"/>
</dbReference>
<dbReference type="PIRSF" id="PIRSF002122">
    <property type="entry name" value="RPS7p_RPS7a_RPS5e_RPS7o"/>
    <property type="match status" value="1"/>
</dbReference>
<dbReference type="SUPFAM" id="SSF47973">
    <property type="entry name" value="Ribosomal protein S7"/>
    <property type="match status" value="1"/>
</dbReference>
<dbReference type="PROSITE" id="PS00052">
    <property type="entry name" value="RIBOSOMAL_S7"/>
    <property type="match status" value="1"/>
</dbReference>
<feature type="chain" id="PRO_1000014319" description="Small ribosomal subunit protein uS7">
    <location>
        <begin position="1"/>
        <end position="155"/>
    </location>
</feature>
<organism>
    <name type="scientific">Xanthomonas oryzae pv. oryzae (strain KACC10331 / KXO85)</name>
    <dbReference type="NCBI Taxonomy" id="291331"/>
    <lineage>
        <taxon>Bacteria</taxon>
        <taxon>Pseudomonadati</taxon>
        <taxon>Pseudomonadota</taxon>
        <taxon>Gammaproteobacteria</taxon>
        <taxon>Lysobacterales</taxon>
        <taxon>Lysobacteraceae</taxon>
        <taxon>Xanthomonas</taxon>
    </lineage>
</organism>